<organism>
    <name type="scientific">Bothrops jararaca</name>
    <name type="common">Jararaca</name>
    <name type="synonym">Bothrops jajaraca</name>
    <dbReference type="NCBI Taxonomy" id="8724"/>
    <lineage>
        <taxon>Eukaryota</taxon>
        <taxon>Metazoa</taxon>
        <taxon>Chordata</taxon>
        <taxon>Craniata</taxon>
        <taxon>Vertebrata</taxon>
        <taxon>Euteleostomi</taxon>
        <taxon>Lepidosauria</taxon>
        <taxon>Squamata</taxon>
        <taxon>Bifurcata</taxon>
        <taxon>Unidentata</taxon>
        <taxon>Episquamata</taxon>
        <taxon>Toxicofera</taxon>
        <taxon>Serpentes</taxon>
        <taxon>Colubroidea</taxon>
        <taxon>Viperidae</taxon>
        <taxon>Crotalinae</taxon>
        <taxon>Bothrops</taxon>
    </lineage>
</organism>
<feature type="chain" id="PRO_0000408027" description="Phospholipase A2">
    <location>
        <begin position="1"/>
        <end position="15" status="greater than"/>
    </location>
</feature>
<feature type="unsure residue" description="Assigned by comparison with orthologs">
    <location>
        <position position="11"/>
    </location>
</feature>
<feature type="non-terminal residue">
    <location>
        <position position="15"/>
    </location>
</feature>
<comment type="function">
    <text evidence="4">PLA2 catalyzes the calcium-dependent hydrolysis of the 2-acyl groups in 3-sn-phosphoglycerides.</text>
</comment>
<comment type="catalytic activity">
    <reaction evidence="2 3">
        <text>a 1,2-diacyl-sn-glycero-3-phosphocholine + H2O = a 1-acyl-sn-glycero-3-phosphocholine + a fatty acid + H(+)</text>
        <dbReference type="Rhea" id="RHEA:15801"/>
        <dbReference type="ChEBI" id="CHEBI:15377"/>
        <dbReference type="ChEBI" id="CHEBI:15378"/>
        <dbReference type="ChEBI" id="CHEBI:28868"/>
        <dbReference type="ChEBI" id="CHEBI:57643"/>
        <dbReference type="ChEBI" id="CHEBI:58168"/>
        <dbReference type="EC" id="3.1.1.4"/>
    </reaction>
</comment>
<comment type="cofactor">
    <cofactor evidence="1">
        <name>Ca(2+)</name>
        <dbReference type="ChEBI" id="CHEBI:29108"/>
    </cofactor>
    <text evidence="1">Binds 1 Ca(2+) ion.</text>
</comment>
<comment type="subcellular location">
    <subcellularLocation>
        <location evidence="4">Secreted</location>
    </subcellularLocation>
</comment>
<comment type="tissue specificity">
    <text evidence="4">Expressed by the venom gland.</text>
</comment>
<comment type="PTM">
    <text evidence="1">Contains 7 disulfide bonds.</text>
</comment>
<comment type="similarity">
    <text evidence="5">Belongs to the phospholipase A2 family. Group II subfamily.</text>
</comment>
<evidence type="ECO:0000250" key="1"/>
<evidence type="ECO:0000255" key="2">
    <source>
        <dbReference type="PROSITE-ProRule" id="PRU10035"/>
    </source>
</evidence>
<evidence type="ECO:0000255" key="3">
    <source>
        <dbReference type="PROSITE-ProRule" id="PRU10036"/>
    </source>
</evidence>
<evidence type="ECO:0000269" key="4">
    <source>
    </source>
</evidence>
<evidence type="ECO:0000305" key="5"/>
<name>PA2_BOTJA</name>
<sequence>NLMQFETMIMKXAGQ</sequence>
<protein>
    <recommendedName>
        <fullName>Phospholipase A2</fullName>
        <shortName>svPLA2</shortName>
        <ecNumber>3.1.1.4</ecNumber>
    </recommendedName>
    <alternativeName>
        <fullName>Phosphatidylcholine 2-acylhydrolase</fullName>
    </alternativeName>
</protein>
<keyword id="KW-0106">Calcium</keyword>
<keyword id="KW-0903">Direct protein sequencing</keyword>
<keyword id="KW-1015">Disulfide bond</keyword>
<keyword id="KW-0378">Hydrolase</keyword>
<keyword id="KW-0442">Lipid degradation</keyword>
<keyword id="KW-0443">Lipid metabolism</keyword>
<keyword id="KW-0479">Metal-binding</keyword>
<keyword id="KW-0964">Secreted</keyword>
<accession>Q9PRZ0</accession>
<proteinExistence type="evidence at protein level"/>
<reference key="1">
    <citation type="journal article" date="1993" name="Braz. J. Med. Biol. Res.">
        <title>Purification, physicochemical characterization and N-terminal-amino acid sequence of a phospholipase A2 from Bothrops jararaca venom.</title>
        <authorList>
            <person name="Machado O.L."/>
            <person name="Oliveira-Carvalho A.L."/>
            <person name="Zingali R.B."/>
            <person name="Carlini C.R."/>
        </authorList>
    </citation>
    <scope>PROTEIN SEQUENCE</scope>
    <scope>FUNCTION</scope>
    <scope>SUBCELLULAR LOCATION</scope>
    <scope>TISSUE SPECIFICITY</scope>
    <source>
        <tissue>Venom</tissue>
    </source>
</reference>
<dbReference type="EC" id="3.1.1.4"/>
<dbReference type="GO" id="GO:0005576">
    <property type="term" value="C:extracellular region"/>
    <property type="evidence" value="ECO:0007669"/>
    <property type="project" value="UniProtKB-SubCell"/>
</dbReference>
<dbReference type="GO" id="GO:0046872">
    <property type="term" value="F:metal ion binding"/>
    <property type="evidence" value="ECO:0007669"/>
    <property type="project" value="UniProtKB-KW"/>
</dbReference>
<dbReference type="GO" id="GO:0004623">
    <property type="term" value="F:phospholipase A2 activity"/>
    <property type="evidence" value="ECO:0007669"/>
    <property type="project" value="UniProtKB-EC"/>
</dbReference>
<dbReference type="GO" id="GO:0016042">
    <property type="term" value="P:lipid catabolic process"/>
    <property type="evidence" value="ECO:0007669"/>
    <property type="project" value="UniProtKB-KW"/>
</dbReference>